<dbReference type="EC" id="3.6.1.27" evidence="1"/>
<dbReference type="EMBL" id="CP001015">
    <property type="protein sequence ID" value="ACF55432.1"/>
    <property type="molecule type" value="Genomic_DNA"/>
</dbReference>
<dbReference type="SMR" id="B5E1R8"/>
<dbReference type="KEGG" id="spx:SPG_0421"/>
<dbReference type="HOGENOM" id="CLU_060296_2_0_9"/>
<dbReference type="GO" id="GO:0005886">
    <property type="term" value="C:plasma membrane"/>
    <property type="evidence" value="ECO:0007669"/>
    <property type="project" value="UniProtKB-SubCell"/>
</dbReference>
<dbReference type="GO" id="GO:0050380">
    <property type="term" value="F:undecaprenyl-diphosphatase activity"/>
    <property type="evidence" value="ECO:0007669"/>
    <property type="project" value="UniProtKB-UniRule"/>
</dbReference>
<dbReference type="GO" id="GO:0071555">
    <property type="term" value="P:cell wall organization"/>
    <property type="evidence" value="ECO:0007669"/>
    <property type="project" value="UniProtKB-KW"/>
</dbReference>
<dbReference type="GO" id="GO:0009252">
    <property type="term" value="P:peptidoglycan biosynthetic process"/>
    <property type="evidence" value="ECO:0007669"/>
    <property type="project" value="UniProtKB-KW"/>
</dbReference>
<dbReference type="GO" id="GO:0008360">
    <property type="term" value="P:regulation of cell shape"/>
    <property type="evidence" value="ECO:0007669"/>
    <property type="project" value="UniProtKB-KW"/>
</dbReference>
<dbReference type="GO" id="GO:0046677">
    <property type="term" value="P:response to antibiotic"/>
    <property type="evidence" value="ECO:0007669"/>
    <property type="project" value="UniProtKB-UniRule"/>
</dbReference>
<dbReference type="HAMAP" id="MF_01006">
    <property type="entry name" value="Undec_diphosphatase"/>
    <property type="match status" value="1"/>
</dbReference>
<dbReference type="InterPro" id="IPR003824">
    <property type="entry name" value="UppP"/>
</dbReference>
<dbReference type="NCBIfam" id="NF001391">
    <property type="entry name" value="PRK00281.1-5"/>
    <property type="match status" value="1"/>
</dbReference>
<dbReference type="PANTHER" id="PTHR30622">
    <property type="entry name" value="UNDECAPRENYL-DIPHOSPHATASE"/>
    <property type="match status" value="1"/>
</dbReference>
<dbReference type="PANTHER" id="PTHR30622:SF3">
    <property type="entry name" value="UNDECAPRENYL-DIPHOSPHATASE"/>
    <property type="match status" value="1"/>
</dbReference>
<dbReference type="Pfam" id="PF02673">
    <property type="entry name" value="BacA"/>
    <property type="match status" value="1"/>
</dbReference>
<name>UPPP_STRP4</name>
<reference key="1">
    <citation type="journal article" date="2001" name="Microb. Drug Resist.">
        <title>Annotated draft genomic sequence from a Streptococcus pneumoniae type 19F clinical isolate.</title>
        <authorList>
            <person name="Dopazo J."/>
            <person name="Mendoza A."/>
            <person name="Herrero J."/>
            <person name="Caldara F."/>
            <person name="Humbert Y."/>
            <person name="Friedli L."/>
            <person name="Guerrier M."/>
            <person name="Grand-Schenk E."/>
            <person name="Gandin C."/>
            <person name="de Francesco M."/>
            <person name="Polissi A."/>
            <person name="Buell G."/>
            <person name="Feger G."/>
            <person name="Garcia E."/>
            <person name="Peitsch M."/>
            <person name="Garcia-Bustos J.F."/>
        </authorList>
    </citation>
    <scope>NUCLEOTIDE SEQUENCE [LARGE SCALE GENOMIC DNA]</scope>
    <source>
        <strain>G54</strain>
    </source>
</reference>
<reference key="2">
    <citation type="submission" date="2008-03" db="EMBL/GenBank/DDBJ databases">
        <title>Pneumococcal beta glucoside metabolism investigated by whole genome comparison.</title>
        <authorList>
            <person name="Mulas L."/>
            <person name="Trappetti C."/>
            <person name="Hakenbeck R."/>
            <person name="Iannelli F."/>
            <person name="Pozzi G."/>
            <person name="Davidsen T.M."/>
            <person name="Tettelin H."/>
            <person name="Oggioni M."/>
        </authorList>
    </citation>
    <scope>NUCLEOTIDE SEQUENCE [LARGE SCALE GENOMIC DNA]</scope>
    <source>
        <strain>G54</strain>
    </source>
</reference>
<sequence length="281" mass="31810">MYLIEILKSIFFGIVEGITEWLPISSTGHLILAEEFIQYQNQNEAFMSMFNVVIQLGAILAVMVIYFNKLNPFKPTKDKQEVRKTWRLWLKVLIATLPLLGVFKFDDWFDTHFHNMVSVALMLIIYGVAFIYLEKRNKARAIEPSVTELDKLPYTTAFYIGLFQVLALLPGTSRSGATIVGGLLNGTSRSVVTEFTFYLGIPVMFGASALKIFKFVKAGELLSFGQLFLLLVAMGVAFAVSMVAIRFLTSYVKKHDFTLFGKYRIVLGSVLLLYSFVRLFV</sequence>
<feature type="chain" id="PRO_1000197412" description="Undecaprenyl-diphosphatase">
    <location>
        <begin position="1"/>
        <end position="281"/>
    </location>
</feature>
<feature type="transmembrane region" description="Helical" evidence="1">
    <location>
        <begin position="4"/>
        <end position="24"/>
    </location>
</feature>
<feature type="transmembrane region" description="Helical" evidence="1">
    <location>
        <begin position="45"/>
        <end position="65"/>
    </location>
</feature>
<feature type="transmembrane region" description="Helical" evidence="1">
    <location>
        <begin position="89"/>
        <end position="109"/>
    </location>
</feature>
<feature type="transmembrane region" description="Helical" evidence="1">
    <location>
        <begin position="113"/>
        <end position="133"/>
    </location>
</feature>
<feature type="transmembrane region" description="Helical" evidence="1">
    <location>
        <begin position="152"/>
        <end position="172"/>
    </location>
</feature>
<feature type="transmembrane region" description="Helical" evidence="1">
    <location>
        <begin position="190"/>
        <end position="210"/>
    </location>
</feature>
<feature type="transmembrane region" description="Helical" evidence="1">
    <location>
        <begin position="225"/>
        <end position="245"/>
    </location>
</feature>
<feature type="transmembrane region" description="Helical" evidence="1">
    <location>
        <begin position="257"/>
        <end position="277"/>
    </location>
</feature>
<comment type="function">
    <text evidence="1">Catalyzes the dephosphorylation of undecaprenyl diphosphate (UPP). Confers resistance to bacitracin.</text>
</comment>
<comment type="catalytic activity">
    <reaction evidence="1">
        <text>di-trans,octa-cis-undecaprenyl diphosphate + H2O = di-trans,octa-cis-undecaprenyl phosphate + phosphate + H(+)</text>
        <dbReference type="Rhea" id="RHEA:28094"/>
        <dbReference type="ChEBI" id="CHEBI:15377"/>
        <dbReference type="ChEBI" id="CHEBI:15378"/>
        <dbReference type="ChEBI" id="CHEBI:43474"/>
        <dbReference type="ChEBI" id="CHEBI:58405"/>
        <dbReference type="ChEBI" id="CHEBI:60392"/>
        <dbReference type="EC" id="3.6.1.27"/>
    </reaction>
</comment>
<comment type="subcellular location">
    <subcellularLocation>
        <location evidence="1">Cell membrane</location>
        <topology evidence="1">Multi-pass membrane protein</topology>
    </subcellularLocation>
</comment>
<comment type="miscellaneous">
    <text>Bacitracin is thought to be involved in the inhibition of peptidoglycan synthesis by sequestering undecaprenyl diphosphate, thereby reducing the pool of lipid carrier available.</text>
</comment>
<comment type="similarity">
    <text evidence="1">Belongs to the UppP family.</text>
</comment>
<protein>
    <recommendedName>
        <fullName evidence="1">Undecaprenyl-diphosphatase</fullName>
        <ecNumber evidence="1">3.6.1.27</ecNumber>
    </recommendedName>
    <alternativeName>
        <fullName evidence="1">Bacitracin resistance protein</fullName>
    </alternativeName>
    <alternativeName>
        <fullName evidence="1">Undecaprenyl pyrophosphate phosphatase</fullName>
    </alternativeName>
</protein>
<keyword id="KW-0046">Antibiotic resistance</keyword>
<keyword id="KW-1003">Cell membrane</keyword>
<keyword id="KW-0133">Cell shape</keyword>
<keyword id="KW-0961">Cell wall biogenesis/degradation</keyword>
<keyword id="KW-0378">Hydrolase</keyword>
<keyword id="KW-0472">Membrane</keyword>
<keyword id="KW-0573">Peptidoglycan synthesis</keyword>
<keyword id="KW-0812">Transmembrane</keyword>
<keyword id="KW-1133">Transmembrane helix</keyword>
<evidence type="ECO:0000255" key="1">
    <source>
        <dbReference type="HAMAP-Rule" id="MF_01006"/>
    </source>
</evidence>
<accession>B5E1R8</accession>
<gene>
    <name evidence="1" type="primary">uppP</name>
    <name type="ordered locus">SPG_0421</name>
</gene>
<proteinExistence type="inferred from homology"/>
<organism>
    <name type="scientific">Streptococcus pneumoniae serotype 19F (strain G54)</name>
    <dbReference type="NCBI Taxonomy" id="512566"/>
    <lineage>
        <taxon>Bacteria</taxon>
        <taxon>Bacillati</taxon>
        <taxon>Bacillota</taxon>
        <taxon>Bacilli</taxon>
        <taxon>Lactobacillales</taxon>
        <taxon>Streptococcaceae</taxon>
        <taxon>Streptococcus</taxon>
    </lineage>
</organism>